<accession>Q0P487</accession>
<accession>A2CET6</accession>
<protein>
    <recommendedName>
        <fullName>NADH-cytochrome b5 reductase 2</fullName>
        <shortName>b5R.2</shortName>
        <ecNumber>1.6.2.2</ecNumber>
    </recommendedName>
</protein>
<dbReference type="EC" id="1.6.2.2"/>
<dbReference type="EMBL" id="CR759887">
    <property type="protein sequence ID" value="CAM16402.1"/>
    <property type="molecule type" value="Genomic_DNA"/>
</dbReference>
<dbReference type="EMBL" id="BC122221">
    <property type="protein sequence ID" value="AAI22222.1"/>
    <property type="molecule type" value="mRNA"/>
</dbReference>
<dbReference type="RefSeq" id="NP_001038825.1">
    <property type="nucleotide sequence ID" value="NM_001045360.1"/>
</dbReference>
<dbReference type="SMR" id="Q0P487"/>
<dbReference type="FunCoup" id="Q0P487">
    <property type="interactions" value="1211"/>
</dbReference>
<dbReference type="STRING" id="7955.ENSDARP00000084821"/>
<dbReference type="PaxDb" id="7955-ENSDARP00000084821"/>
<dbReference type="Ensembl" id="ENSDART00000090388">
    <property type="protein sequence ID" value="ENSDARP00000084821"/>
    <property type="gene ID" value="ENSDARG00000051925"/>
</dbReference>
<dbReference type="GeneID" id="751641"/>
<dbReference type="KEGG" id="dre:751641"/>
<dbReference type="AGR" id="ZFIN:ZDB-GENE-060825-83"/>
<dbReference type="CTD" id="51700"/>
<dbReference type="ZFIN" id="ZDB-GENE-060825-83">
    <property type="gene designation" value="cyb5r2"/>
</dbReference>
<dbReference type="eggNOG" id="KOG0534">
    <property type="taxonomic scope" value="Eukaryota"/>
</dbReference>
<dbReference type="HOGENOM" id="CLU_003827_9_2_1"/>
<dbReference type="InParanoid" id="Q0P487"/>
<dbReference type="OrthoDB" id="432685at2759"/>
<dbReference type="PhylomeDB" id="Q0P487"/>
<dbReference type="TreeFam" id="TF314333"/>
<dbReference type="Reactome" id="R-DRE-1237044">
    <property type="pathway name" value="Erythrocytes take up carbon dioxide and release oxygen"/>
</dbReference>
<dbReference type="PRO" id="PR:Q0P487"/>
<dbReference type="Proteomes" id="UP000000437">
    <property type="component" value="Chromosome 25"/>
</dbReference>
<dbReference type="Bgee" id="ENSDARG00000051925">
    <property type="expression patterns" value="Expressed in intestine and 15 other cell types or tissues"/>
</dbReference>
<dbReference type="ExpressionAtlas" id="Q0P487">
    <property type="expression patterns" value="baseline"/>
</dbReference>
<dbReference type="GO" id="GO:0016020">
    <property type="term" value="C:membrane"/>
    <property type="evidence" value="ECO:0007669"/>
    <property type="project" value="UniProtKB-SubCell"/>
</dbReference>
<dbReference type="GO" id="GO:0005739">
    <property type="term" value="C:mitochondrion"/>
    <property type="evidence" value="ECO:0000318"/>
    <property type="project" value="GO_Central"/>
</dbReference>
<dbReference type="GO" id="GO:0004128">
    <property type="term" value="F:cytochrome-b5 reductase activity, acting on NAD(P)H"/>
    <property type="evidence" value="ECO:0007669"/>
    <property type="project" value="UniProtKB-EC"/>
</dbReference>
<dbReference type="GO" id="GO:0071949">
    <property type="term" value="F:FAD binding"/>
    <property type="evidence" value="ECO:0000318"/>
    <property type="project" value="GO_Central"/>
</dbReference>
<dbReference type="GO" id="GO:0001878">
    <property type="term" value="P:response to yeast"/>
    <property type="evidence" value="ECO:0000314"/>
    <property type="project" value="ZFIN"/>
</dbReference>
<dbReference type="GO" id="GO:0016126">
    <property type="term" value="P:sterol biosynthetic process"/>
    <property type="evidence" value="ECO:0007669"/>
    <property type="project" value="UniProtKB-KW"/>
</dbReference>
<dbReference type="CDD" id="cd06183">
    <property type="entry name" value="cyt_b5_reduct_like"/>
    <property type="match status" value="1"/>
</dbReference>
<dbReference type="FunFam" id="2.40.30.10:FF:000021">
    <property type="entry name" value="NADH-cytochrome b5 reductase"/>
    <property type="match status" value="1"/>
</dbReference>
<dbReference type="FunFam" id="3.40.50.80:FF:000005">
    <property type="entry name" value="NADH-cytochrome b5 reductase"/>
    <property type="match status" value="1"/>
</dbReference>
<dbReference type="Gene3D" id="3.40.50.80">
    <property type="entry name" value="Nucleotide-binding domain of ferredoxin-NADP reductase (FNR) module"/>
    <property type="match status" value="1"/>
</dbReference>
<dbReference type="Gene3D" id="2.40.30.10">
    <property type="entry name" value="Translation factors"/>
    <property type="match status" value="1"/>
</dbReference>
<dbReference type="InterPro" id="IPR001834">
    <property type="entry name" value="CBR-like"/>
</dbReference>
<dbReference type="InterPro" id="IPR008333">
    <property type="entry name" value="Cbr1-like_FAD-bd_dom"/>
</dbReference>
<dbReference type="InterPro" id="IPR017927">
    <property type="entry name" value="FAD-bd_FR_type"/>
</dbReference>
<dbReference type="InterPro" id="IPR001709">
    <property type="entry name" value="Flavoprot_Pyr_Nucl_cyt_Rdtase"/>
</dbReference>
<dbReference type="InterPro" id="IPR039261">
    <property type="entry name" value="FNR_nucleotide-bd"/>
</dbReference>
<dbReference type="InterPro" id="IPR001433">
    <property type="entry name" value="OxRdtase_FAD/NAD-bd"/>
</dbReference>
<dbReference type="InterPro" id="IPR017938">
    <property type="entry name" value="Riboflavin_synthase-like_b-brl"/>
</dbReference>
<dbReference type="PANTHER" id="PTHR19370">
    <property type="entry name" value="NADH-CYTOCHROME B5 REDUCTASE"/>
    <property type="match status" value="1"/>
</dbReference>
<dbReference type="PANTHER" id="PTHR19370:SF108">
    <property type="entry name" value="NADH-CYTOCHROME B5 REDUCTASE 2"/>
    <property type="match status" value="1"/>
</dbReference>
<dbReference type="Pfam" id="PF00970">
    <property type="entry name" value="FAD_binding_6"/>
    <property type="match status" value="1"/>
</dbReference>
<dbReference type="Pfam" id="PF00175">
    <property type="entry name" value="NAD_binding_1"/>
    <property type="match status" value="1"/>
</dbReference>
<dbReference type="PRINTS" id="PR00406">
    <property type="entry name" value="CYTB5RDTASE"/>
</dbReference>
<dbReference type="PRINTS" id="PR00371">
    <property type="entry name" value="FPNCR"/>
</dbReference>
<dbReference type="SUPFAM" id="SSF52343">
    <property type="entry name" value="Ferredoxin reductase-like, C-terminal NADP-linked domain"/>
    <property type="match status" value="1"/>
</dbReference>
<dbReference type="SUPFAM" id="SSF63380">
    <property type="entry name" value="Riboflavin synthase domain-like"/>
    <property type="match status" value="1"/>
</dbReference>
<dbReference type="PROSITE" id="PS51384">
    <property type="entry name" value="FAD_FR"/>
    <property type="match status" value="1"/>
</dbReference>
<comment type="function">
    <text evidence="1">NADH-cytochrome b5 reductases are involved in desaturation and elongation of fatty acids, cholesterol biosynthesis and drug metabolism.</text>
</comment>
<comment type="catalytic activity">
    <reaction>
        <text>2 Fe(III)-[cytochrome b5] + NADH = 2 Fe(II)-[cytochrome b5] + NAD(+) + H(+)</text>
        <dbReference type="Rhea" id="RHEA:46680"/>
        <dbReference type="Rhea" id="RHEA-COMP:10438"/>
        <dbReference type="Rhea" id="RHEA-COMP:10439"/>
        <dbReference type="ChEBI" id="CHEBI:15378"/>
        <dbReference type="ChEBI" id="CHEBI:29033"/>
        <dbReference type="ChEBI" id="CHEBI:29034"/>
        <dbReference type="ChEBI" id="CHEBI:57540"/>
        <dbReference type="ChEBI" id="CHEBI:57945"/>
        <dbReference type="EC" id="1.6.2.2"/>
    </reaction>
</comment>
<comment type="cofactor">
    <cofactor evidence="1">
        <name>FAD</name>
        <dbReference type="ChEBI" id="CHEBI:57692"/>
    </cofactor>
</comment>
<comment type="subcellular location">
    <subcellularLocation>
        <location evidence="4">Membrane</location>
        <topology evidence="4">Single-pass membrane protein</topology>
    </subcellularLocation>
</comment>
<comment type="similarity">
    <text evidence="4">Belongs to the flavoprotein pyridine nucleotide cytochrome reductase family.</text>
</comment>
<sequence length="309" mass="34388">MDILTAPVLIGVSIVVITVLYLFLKPAGSNSTPPKPQNKIPKALQDPSVKYPLPLIEKEEINHDTKRFRFGLPSSSHVLGLPIGQHIYLSAKVNGSLVVRAYTPVSSDQDQGYVDLVVKVYYKNTHPSYPDGGKMSQYLDNMKIGDTIDFRGPNGLLVYNGKGKFAIRPDKKSEAEVRKFKHVAMIAGGTGITPMLQLIRSITADSFDETVCSLIFANQTEKDILLRNELDEVHRNHPSKLKLWYTLDRPSEGWKYSEGFVNAAMMKDHLPPADSDVLVVMCGPPAMIEKACLPNLLKLGYKKENIFAY</sequence>
<name>NB5R2_DANRE</name>
<feature type="chain" id="PRO_0000287552" description="NADH-cytochrome b5 reductase 2">
    <location>
        <begin position="1"/>
        <end position="309"/>
    </location>
</feature>
<feature type="transmembrane region" description="Helical" evidence="2">
    <location>
        <begin position="3"/>
        <end position="23"/>
    </location>
</feature>
<feature type="domain" description="FAD-binding FR-type" evidence="3">
    <location>
        <begin position="48"/>
        <end position="160"/>
    </location>
</feature>
<feature type="binding site" evidence="1">
    <location>
        <begin position="140"/>
        <end position="170"/>
    </location>
    <ligand>
        <name>FAD</name>
        <dbReference type="ChEBI" id="CHEBI:57692"/>
    </ligand>
</feature>
<feature type="binding site" evidence="1">
    <location>
        <begin position="179"/>
        <end position="214"/>
    </location>
    <ligand>
        <name>FAD</name>
        <dbReference type="ChEBI" id="CHEBI:57692"/>
    </ligand>
</feature>
<feature type="sequence conflict" description="In Ref. 2; AAI22222." evidence="4" ref="2">
    <original>I</original>
    <variation>V</variation>
    <location>
        <position position="199"/>
    </location>
</feature>
<feature type="sequence conflict" description="In Ref. 2; AAI22222." evidence="4" ref="2">
    <original>F</original>
    <variation>S</variation>
    <location>
        <position position="207"/>
    </location>
</feature>
<keyword id="KW-0274">FAD</keyword>
<keyword id="KW-0285">Flavoprotein</keyword>
<keyword id="KW-0444">Lipid biosynthesis</keyword>
<keyword id="KW-0443">Lipid metabolism</keyword>
<keyword id="KW-0472">Membrane</keyword>
<keyword id="KW-0520">NAD</keyword>
<keyword id="KW-0560">Oxidoreductase</keyword>
<keyword id="KW-1185">Reference proteome</keyword>
<keyword id="KW-0752">Steroid biosynthesis</keyword>
<keyword id="KW-0753">Steroid metabolism</keyword>
<keyword id="KW-0756">Sterol biosynthesis</keyword>
<keyword id="KW-1207">Sterol metabolism</keyword>
<keyword id="KW-0812">Transmembrane</keyword>
<keyword id="KW-1133">Transmembrane helix</keyword>
<proteinExistence type="evidence at transcript level"/>
<reference key="1">
    <citation type="journal article" date="2013" name="Nature">
        <title>The zebrafish reference genome sequence and its relationship to the human genome.</title>
        <authorList>
            <person name="Howe K."/>
            <person name="Clark M.D."/>
            <person name="Torroja C.F."/>
            <person name="Torrance J."/>
            <person name="Berthelot C."/>
            <person name="Muffato M."/>
            <person name="Collins J.E."/>
            <person name="Humphray S."/>
            <person name="McLaren K."/>
            <person name="Matthews L."/>
            <person name="McLaren S."/>
            <person name="Sealy I."/>
            <person name="Caccamo M."/>
            <person name="Churcher C."/>
            <person name="Scott C."/>
            <person name="Barrett J.C."/>
            <person name="Koch R."/>
            <person name="Rauch G.J."/>
            <person name="White S."/>
            <person name="Chow W."/>
            <person name="Kilian B."/>
            <person name="Quintais L.T."/>
            <person name="Guerra-Assuncao J.A."/>
            <person name="Zhou Y."/>
            <person name="Gu Y."/>
            <person name="Yen J."/>
            <person name="Vogel J.H."/>
            <person name="Eyre T."/>
            <person name="Redmond S."/>
            <person name="Banerjee R."/>
            <person name="Chi J."/>
            <person name="Fu B."/>
            <person name="Langley E."/>
            <person name="Maguire S.F."/>
            <person name="Laird G.K."/>
            <person name="Lloyd D."/>
            <person name="Kenyon E."/>
            <person name="Donaldson S."/>
            <person name="Sehra H."/>
            <person name="Almeida-King J."/>
            <person name="Loveland J."/>
            <person name="Trevanion S."/>
            <person name="Jones M."/>
            <person name="Quail M."/>
            <person name="Willey D."/>
            <person name="Hunt A."/>
            <person name="Burton J."/>
            <person name="Sims S."/>
            <person name="McLay K."/>
            <person name="Plumb B."/>
            <person name="Davis J."/>
            <person name="Clee C."/>
            <person name="Oliver K."/>
            <person name="Clark R."/>
            <person name="Riddle C."/>
            <person name="Elliot D."/>
            <person name="Threadgold G."/>
            <person name="Harden G."/>
            <person name="Ware D."/>
            <person name="Begum S."/>
            <person name="Mortimore B."/>
            <person name="Kerry G."/>
            <person name="Heath P."/>
            <person name="Phillimore B."/>
            <person name="Tracey A."/>
            <person name="Corby N."/>
            <person name="Dunn M."/>
            <person name="Johnson C."/>
            <person name="Wood J."/>
            <person name="Clark S."/>
            <person name="Pelan S."/>
            <person name="Griffiths G."/>
            <person name="Smith M."/>
            <person name="Glithero R."/>
            <person name="Howden P."/>
            <person name="Barker N."/>
            <person name="Lloyd C."/>
            <person name="Stevens C."/>
            <person name="Harley J."/>
            <person name="Holt K."/>
            <person name="Panagiotidis G."/>
            <person name="Lovell J."/>
            <person name="Beasley H."/>
            <person name="Henderson C."/>
            <person name="Gordon D."/>
            <person name="Auger K."/>
            <person name="Wright D."/>
            <person name="Collins J."/>
            <person name="Raisen C."/>
            <person name="Dyer L."/>
            <person name="Leung K."/>
            <person name="Robertson L."/>
            <person name="Ambridge K."/>
            <person name="Leongamornlert D."/>
            <person name="McGuire S."/>
            <person name="Gilderthorp R."/>
            <person name="Griffiths C."/>
            <person name="Manthravadi D."/>
            <person name="Nichol S."/>
            <person name="Barker G."/>
            <person name="Whitehead S."/>
            <person name="Kay M."/>
            <person name="Brown J."/>
            <person name="Murnane C."/>
            <person name="Gray E."/>
            <person name="Humphries M."/>
            <person name="Sycamore N."/>
            <person name="Barker D."/>
            <person name="Saunders D."/>
            <person name="Wallis J."/>
            <person name="Babbage A."/>
            <person name="Hammond S."/>
            <person name="Mashreghi-Mohammadi M."/>
            <person name="Barr L."/>
            <person name="Martin S."/>
            <person name="Wray P."/>
            <person name="Ellington A."/>
            <person name="Matthews N."/>
            <person name="Ellwood M."/>
            <person name="Woodmansey R."/>
            <person name="Clark G."/>
            <person name="Cooper J."/>
            <person name="Tromans A."/>
            <person name="Grafham D."/>
            <person name="Skuce C."/>
            <person name="Pandian R."/>
            <person name="Andrews R."/>
            <person name="Harrison E."/>
            <person name="Kimberley A."/>
            <person name="Garnett J."/>
            <person name="Fosker N."/>
            <person name="Hall R."/>
            <person name="Garner P."/>
            <person name="Kelly D."/>
            <person name="Bird C."/>
            <person name="Palmer S."/>
            <person name="Gehring I."/>
            <person name="Berger A."/>
            <person name="Dooley C.M."/>
            <person name="Ersan-Urun Z."/>
            <person name="Eser C."/>
            <person name="Geiger H."/>
            <person name="Geisler M."/>
            <person name="Karotki L."/>
            <person name="Kirn A."/>
            <person name="Konantz J."/>
            <person name="Konantz M."/>
            <person name="Oberlander M."/>
            <person name="Rudolph-Geiger S."/>
            <person name="Teucke M."/>
            <person name="Lanz C."/>
            <person name="Raddatz G."/>
            <person name="Osoegawa K."/>
            <person name="Zhu B."/>
            <person name="Rapp A."/>
            <person name="Widaa S."/>
            <person name="Langford C."/>
            <person name="Yang F."/>
            <person name="Schuster S.C."/>
            <person name="Carter N.P."/>
            <person name="Harrow J."/>
            <person name="Ning Z."/>
            <person name="Herrero J."/>
            <person name="Searle S.M."/>
            <person name="Enright A."/>
            <person name="Geisler R."/>
            <person name="Plasterk R.H."/>
            <person name="Lee C."/>
            <person name="Westerfield M."/>
            <person name="de Jong P.J."/>
            <person name="Zon L.I."/>
            <person name="Postlethwait J.H."/>
            <person name="Nusslein-Volhard C."/>
            <person name="Hubbard T.J."/>
            <person name="Roest Crollius H."/>
            <person name="Rogers J."/>
            <person name="Stemple D.L."/>
        </authorList>
    </citation>
    <scope>NUCLEOTIDE SEQUENCE [LARGE SCALE GENOMIC DNA]</scope>
    <source>
        <strain>Tuebingen</strain>
    </source>
</reference>
<reference key="2">
    <citation type="submission" date="2006-08" db="EMBL/GenBank/DDBJ databases">
        <authorList>
            <consortium name="NIH - Zebrafish Gene Collection (ZGC) project"/>
        </authorList>
    </citation>
    <scope>NUCLEOTIDE SEQUENCE [LARGE SCALE MRNA]</scope>
    <source>
        <strain>AB</strain>
        <tissue>Skin</tissue>
    </source>
</reference>
<organism>
    <name type="scientific">Danio rerio</name>
    <name type="common">Zebrafish</name>
    <name type="synonym">Brachydanio rerio</name>
    <dbReference type="NCBI Taxonomy" id="7955"/>
    <lineage>
        <taxon>Eukaryota</taxon>
        <taxon>Metazoa</taxon>
        <taxon>Chordata</taxon>
        <taxon>Craniata</taxon>
        <taxon>Vertebrata</taxon>
        <taxon>Euteleostomi</taxon>
        <taxon>Actinopterygii</taxon>
        <taxon>Neopterygii</taxon>
        <taxon>Teleostei</taxon>
        <taxon>Ostariophysi</taxon>
        <taxon>Cypriniformes</taxon>
        <taxon>Danionidae</taxon>
        <taxon>Danioninae</taxon>
        <taxon>Danio</taxon>
    </lineage>
</organism>
<evidence type="ECO:0000250" key="1"/>
<evidence type="ECO:0000255" key="2"/>
<evidence type="ECO:0000255" key="3">
    <source>
        <dbReference type="PROSITE-ProRule" id="PRU00716"/>
    </source>
</evidence>
<evidence type="ECO:0000305" key="4"/>
<gene>
    <name type="primary">cyb5r2</name>
    <name type="ORF">si:dkey-80c24.9</name>
    <name type="ORF">zgc:153291</name>
</gene>